<organism>
    <name type="scientific">Mycobacterium tuberculosis (strain ATCC 25177 / H37Ra)</name>
    <dbReference type="NCBI Taxonomy" id="419947"/>
    <lineage>
        <taxon>Bacteria</taxon>
        <taxon>Bacillati</taxon>
        <taxon>Actinomycetota</taxon>
        <taxon>Actinomycetes</taxon>
        <taxon>Mycobacteriales</taxon>
        <taxon>Mycobacteriaceae</taxon>
        <taxon>Mycobacterium</taxon>
        <taxon>Mycobacterium tuberculosis complex</taxon>
    </lineage>
</organism>
<proteinExistence type="evidence at protein level"/>
<feature type="chain" id="PRO_0000458844" description="DNA topoisomerase 1">
    <location>
        <begin position="1"/>
        <end position="934"/>
    </location>
</feature>
<feature type="domain" description="Toprim" evidence="1">
    <location>
        <begin position="18"/>
        <end position="142"/>
    </location>
</feature>
<feature type="domain" description="Topo IA-type catalytic" evidence="2">
    <location>
        <begin position="157"/>
        <end position="616"/>
    </location>
</feature>
<feature type="region of interest" description="Disordered" evidence="3">
    <location>
        <begin position="1"/>
        <end position="20"/>
    </location>
</feature>
<feature type="region of interest" description="Interaction with DNA" evidence="1">
    <location>
        <begin position="191"/>
        <end position="196"/>
    </location>
</feature>
<feature type="region of interest" description="Disordered" evidence="3">
    <location>
        <begin position="746"/>
        <end position="765"/>
    </location>
</feature>
<feature type="region of interest" description="Disordered" evidence="3">
    <location>
        <begin position="842"/>
        <end position="892"/>
    </location>
</feature>
<feature type="region of interest" description="Disordered" evidence="3">
    <location>
        <begin position="905"/>
        <end position="934"/>
    </location>
</feature>
<feature type="compositionally biased region" description="Basic residues" evidence="3">
    <location>
        <begin position="911"/>
        <end position="934"/>
    </location>
</feature>
<feature type="active site" description="O-(5'-phospho-DNA)-tyrosine intermediate" evidence="2">
    <location>
        <position position="342"/>
    </location>
</feature>
<feature type="binding site" evidence="1">
    <location>
        <position position="24"/>
    </location>
    <ligand>
        <name>Mg(2+)</name>
        <dbReference type="ChEBI" id="CHEBI:18420"/>
        <note>catalytic</note>
    </ligand>
</feature>
<feature type="binding site" evidence="1">
    <location>
        <position position="111"/>
    </location>
    <ligand>
        <name>Mg(2+)</name>
        <dbReference type="ChEBI" id="CHEBI:18420"/>
        <note>catalytic</note>
    </ligand>
</feature>
<feature type="site" description="Interaction with DNA" evidence="1">
    <location>
        <position position="48"/>
    </location>
</feature>
<feature type="site" description="Interaction with DNA" evidence="1">
    <location>
        <position position="167"/>
    </location>
</feature>
<feature type="site" description="Interaction with DNA" evidence="1">
    <location>
        <position position="168"/>
    </location>
</feature>
<feature type="site" description="Interaction with DNA" evidence="1">
    <location>
        <position position="171"/>
    </location>
</feature>
<feature type="site" description="Interaction with DNA" evidence="1">
    <location>
        <position position="176"/>
    </location>
</feature>
<feature type="site" description="Interaction with DNA" evidence="1">
    <location>
        <position position="183"/>
    </location>
</feature>
<feature type="site" description="Interaction with DNA" evidence="1">
    <location>
        <position position="344"/>
    </location>
</feature>
<feature type="site" description="Interaction with DNA" evidence="1">
    <location>
        <position position="547"/>
    </location>
</feature>
<protein>
    <recommendedName>
        <fullName evidence="1">DNA topoisomerase 1</fullName>
        <ecNumber evidence="1 4">5.6.2.1</ecNumber>
    </recommendedName>
    <alternativeName>
        <fullName evidence="1">DNA topoisomerase I</fullName>
    </alternativeName>
</protein>
<gene>
    <name evidence="1 5" type="primary">topA</name>
    <name evidence="5" type="ordered locus">MRA_3681</name>
</gene>
<sequence>MADPKTKGRGSGGNGSGRRLVIVESPTKARKLASYLGSGYIVESSRGHIRDLPRAASDVPAKYKSQPWARLGVNVDADFEPLYIISPEKRSTVSELRGLLKDVDELYLATDGDREGEAIAWHLLETLKPRIPVKRMVFHEITEPAIRAAAEHPRDLDIDLVDAQETRRILDRLYGYEVSPVLWKKVAPKLSAGRVQSVATRIIVARERDRMAFRSAAYWDILAKLDASVSDPDAAPPTFSARLTAVAGRRVATGRDFDSLGTLRKGDEVIVLDEGSATALAAGLDGTQLTVASAEEKPYARRPYPPFMTSTLQQEASRKLRFSAERTMSIAQRLYENGYITYMRTDSTTLSESAINAARTQARQLYGDEYVAPAPRQYTRKVKNAQEAHEAIRPAGETFATPDAVRRELDGPNIDDFRLYELIWQRTVASQMADARGMTLSLRITGMSGHQEVVFSATGRTLTFPGFLKAYVETVDELVGGEADDAERRLPHLTPGQRLDIVELTPDGHATNPPARYTEASLVKALEELGIGRPSTYSSIIKTIQDRGYVHKKGSALVPSWVAFAVTGLLEQHFGRLVDYDFTAAMEDELDEIAAGNERRTNWLNNFYFGGDHGVPDSVARSGGLKKLVGINLEGIDAREVNSIKLFDDTHGRPIYVRVGKNGPYLERLVAGDTGEPTPQRANLSDSITPDELTLQVAEELFATPQQGRTLGLDPETGHEIVAREGRFGPYVTEILPEPAADAAAAAQGVKKRQKAAGPKPRTGSLLRSMDLQTVTLEDALRLLSLPRVVGVDPASGEEITAQNGRYGPYLKRGNDSRSLVTEDQIFTITLDEALKIYAEPKRRGRQSASAPPLRELGTDPASGKPMVIKDGRFGPYVTDGETNASLRKGDDVASITDERAAELLADRRARGPAKRPARKAARKVPAKKAAKRD</sequence>
<keyword id="KW-0238">DNA-binding</keyword>
<keyword id="KW-0413">Isomerase</keyword>
<keyword id="KW-0460">Magnesium</keyword>
<keyword id="KW-0479">Metal-binding</keyword>
<keyword id="KW-1185">Reference proteome</keyword>
<keyword id="KW-0799">Topoisomerase</keyword>
<accession>A5U8X0</accession>
<dbReference type="EC" id="5.6.2.1" evidence="1 4"/>
<dbReference type="EMBL" id="CP000611">
    <property type="protein sequence ID" value="ABQ75470.1"/>
    <property type="molecule type" value="Genomic_DNA"/>
</dbReference>
<dbReference type="RefSeq" id="WP_003899617.1">
    <property type="nucleotide sequence ID" value="NZ_CP016972.1"/>
</dbReference>
<dbReference type="SMR" id="A5U8X0"/>
<dbReference type="GeneID" id="45427643"/>
<dbReference type="KEGG" id="mra:MRA_3681"/>
<dbReference type="eggNOG" id="COG0550">
    <property type="taxonomic scope" value="Bacteria"/>
</dbReference>
<dbReference type="eggNOG" id="COG1754">
    <property type="taxonomic scope" value="Bacteria"/>
</dbReference>
<dbReference type="HOGENOM" id="CLU_002929_2_0_11"/>
<dbReference type="BRENDA" id="5.6.2.1">
    <property type="organism ID" value="3445"/>
</dbReference>
<dbReference type="Proteomes" id="UP000001988">
    <property type="component" value="Chromosome"/>
</dbReference>
<dbReference type="GO" id="GO:0003677">
    <property type="term" value="F:DNA binding"/>
    <property type="evidence" value="ECO:0007669"/>
    <property type="project" value="UniProtKB-KW"/>
</dbReference>
<dbReference type="GO" id="GO:0003917">
    <property type="term" value="F:DNA topoisomerase type I (single strand cut, ATP-independent) activity"/>
    <property type="evidence" value="ECO:0007669"/>
    <property type="project" value="UniProtKB-UniRule"/>
</dbReference>
<dbReference type="GO" id="GO:0046872">
    <property type="term" value="F:metal ion binding"/>
    <property type="evidence" value="ECO:0007669"/>
    <property type="project" value="UniProtKB-KW"/>
</dbReference>
<dbReference type="GO" id="GO:0006265">
    <property type="term" value="P:DNA topological change"/>
    <property type="evidence" value="ECO:0007669"/>
    <property type="project" value="UniProtKB-UniRule"/>
</dbReference>
<dbReference type="CDD" id="cd00186">
    <property type="entry name" value="TOP1Ac"/>
    <property type="match status" value="1"/>
</dbReference>
<dbReference type="CDD" id="cd03363">
    <property type="entry name" value="TOPRIM_TopoIA_TopoI"/>
    <property type="match status" value="1"/>
</dbReference>
<dbReference type="FunFam" id="1.10.290.10:FF:000002">
    <property type="entry name" value="DNA topoisomerase 1"/>
    <property type="match status" value="1"/>
</dbReference>
<dbReference type="FunFam" id="3.40.50.140:FF:000001">
    <property type="entry name" value="DNA topoisomerase 1"/>
    <property type="match status" value="1"/>
</dbReference>
<dbReference type="Gene3D" id="3.40.50.140">
    <property type="match status" value="1"/>
</dbReference>
<dbReference type="Gene3D" id="1.10.460.10">
    <property type="entry name" value="Topoisomerase I, domain 2"/>
    <property type="match status" value="1"/>
</dbReference>
<dbReference type="Gene3D" id="2.70.20.10">
    <property type="entry name" value="Topoisomerase I, domain 3"/>
    <property type="match status" value="1"/>
</dbReference>
<dbReference type="Gene3D" id="1.10.290.10">
    <property type="entry name" value="Topoisomerase I, domain 4"/>
    <property type="match status" value="1"/>
</dbReference>
<dbReference type="HAMAP" id="MF_00952">
    <property type="entry name" value="Topoisom_1_prok"/>
    <property type="match status" value="1"/>
</dbReference>
<dbReference type="InterPro" id="IPR000380">
    <property type="entry name" value="Topo_IA"/>
</dbReference>
<dbReference type="InterPro" id="IPR003601">
    <property type="entry name" value="Topo_IA_2"/>
</dbReference>
<dbReference type="InterPro" id="IPR023406">
    <property type="entry name" value="Topo_IA_AS"/>
</dbReference>
<dbReference type="InterPro" id="IPR013497">
    <property type="entry name" value="Topo_IA_cen"/>
</dbReference>
<dbReference type="InterPro" id="IPR013824">
    <property type="entry name" value="Topo_IA_cen_sub1"/>
</dbReference>
<dbReference type="InterPro" id="IPR013825">
    <property type="entry name" value="Topo_IA_cen_sub2"/>
</dbReference>
<dbReference type="InterPro" id="IPR013826">
    <property type="entry name" value="Topo_IA_cen_sub3"/>
</dbReference>
<dbReference type="InterPro" id="IPR023405">
    <property type="entry name" value="Topo_IA_core_domain"/>
</dbReference>
<dbReference type="InterPro" id="IPR003602">
    <property type="entry name" value="Topo_IA_DNA-bd_dom"/>
</dbReference>
<dbReference type="InterPro" id="IPR005733">
    <property type="entry name" value="TopoI_bac-type"/>
</dbReference>
<dbReference type="InterPro" id="IPR028612">
    <property type="entry name" value="Topoisom_1_IA"/>
</dbReference>
<dbReference type="InterPro" id="IPR025589">
    <property type="entry name" value="Toprim_C_rpt"/>
</dbReference>
<dbReference type="InterPro" id="IPR006171">
    <property type="entry name" value="TOPRIM_dom"/>
</dbReference>
<dbReference type="InterPro" id="IPR034149">
    <property type="entry name" value="TOPRIM_TopoI"/>
</dbReference>
<dbReference type="NCBIfam" id="TIGR01051">
    <property type="entry name" value="topA_bact"/>
    <property type="match status" value="1"/>
</dbReference>
<dbReference type="PANTHER" id="PTHR42785:SF1">
    <property type="entry name" value="DNA TOPOISOMERASE"/>
    <property type="match status" value="1"/>
</dbReference>
<dbReference type="PANTHER" id="PTHR42785">
    <property type="entry name" value="DNA TOPOISOMERASE, TYPE IA, CORE"/>
    <property type="match status" value="1"/>
</dbReference>
<dbReference type="Pfam" id="PF01131">
    <property type="entry name" value="Topoisom_bac"/>
    <property type="match status" value="1"/>
</dbReference>
<dbReference type="Pfam" id="PF01751">
    <property type="entry name" value="Toprim"/>
    <property type="match status" value="1"/>
</dbReference>
<dbReference type="Pfam" id="PF13368">
    <property type="entry name" value="Toprim_C_rpt"/>
    <property type="match status" value="4"/>
</dbReference>
<dbReference type="PRINTS" id="PR00417">
    <property type="entry name" value="PRTPISMRASEI"/>
</dbReference>
<dbReference type="SMART" id="SM00437">
    <property type="entry name" value="TOP1Ac"/>
    <property type="match status" value="1"/>
</dbReference>
<dbReference type="SMART" id="SM00436">
    <property type="entry name" value="TOP1Bc"/>
    <property type="match status" value="1"/>
</dbReference>
<dbReference type="SMART" id="SM00493">
    <property type="entry name" value="TOPRIM"/>
    <property type="match status" value="1"/>
</dbReference>
<dbReference type="SUPFAM" id="SSF56712">
    <property type="entry name" value="Prokaryotic type I DNA topoisomerase"/>
    <property type="match status" value="1"/>
</dbReference>
<dbReference type="PROSITE" id="PS00396">
    <property type="entry name" value="TOPO_IA_1"/>
    <property type="match status" value="1"/>
</dbReference>
<dbReference type="PROSITE" id="PS52039">
    <property type="entry name" value="TOPO_IA_2"/>
    <property type="match status" value="1"/>
</dbReference>
<dbReference type="PROSITE" id="PS50880">
    <property type="entry name" value="TOPRIM"/>
    <property type="match status" value="1"/>
</dbReference>
<reference evidence="5" key="1">
    <citation type="journal article" date="2008" name="PLoS ONE">
        <title>Genetic basis of virulence attenuation revealed by comparative genomic analysis of Mycobacterium tuberculosis strain H37Ra versus H37Rv.</title>
        <authorList>
            <person name="Zheng H."/>
            <person name="Lu L."/>
            <person name="Wang B."/>
            <person name="Pu S."/>
            <person name="Zhang X."/>
            <person name="Zhu G."/>
            <person name="Shi W."/>
            <person name="Zhang L."/>
            <person name="Wang H."/>
            <person name="Wang S."/>
            <person name="Zhao G."/>
            <person name="Zhang Y."/>
        </authorList>
    </citation>
    <scope>NUCLEOTIDE SEQUENCE [LARGE SCALE GENOMIC DNA]</scope>
    <source>
        <strain>ATCC 25177 / H37Ra</strain>
    </source>
</reference>
<reference key="2">
    <citation type="journal article" date="2014" name="Nucleic Acids Res.">
        <title>Direct regulation of topoisomerase activity by a nucleoid-associated protein.</title>
        <authorList>
            <person name="Ghosh S."/>
            <person name="Mallick B."/>
            <person name="Nagaraja V."/>
        </authorList>
    </citation>
    <scope>FUNCTION</scope>
    <scope>CATALYTIC ACTIVITY</scope>
    <scope>ACTIVITY REGULATION</scope>
    <scope>INTERACTION WITH HUPB</scope>
    <scope>DOMAIN</scope>
</reference>
<name>TOP1_MYCTA</name>
<evidence type="ECO:0000255" key="1">
    <source>
        <dbReference type="HAMAP-Rule" id="MF_00952"/>
    </source>
</evidence>
<evidence type="ECO:0000255" key="2">
    <source>
        <dbReference type="PROSITE-ProRule" id="PRU01383"/>
    </source>
</evidence>
<evidence type="ECO:0000256" key="3">
    <source>
        <dbReference type="SAM" id="MobiDB-lite"/>
    </source>
</evidence>
<evidence type="ECO:0000269" key="4">
    <source>
    </source>
</evidence>
<evidence type="ECO:0000312" key="5">
    <source>
        <dbReference type="EMBL" id="ABQ75470.1"/>
    </source>
</evidence>
<comment type="function">
    <text evidence="1 4">Releases the supercoiling and torsional tension of DNA, which is introduced during the DNA replication and transcription, by transiently cleaving and rejoining one strand of the DNA duplex (By similarity) (PubMed:25200077). Introduces a single-strand break via transesterification at a target site in duplex DNA. The scissile phosphodiester is attacked by the catalytic tyrosine of the enzyme, resulting in the formation of a DNA-(5'-phosphotyrosyl)-enzyme intermediate and the expulsion of a 3'-OH DNA strand. The free DNA strand then undergoes passage around the unbroken strand, thus removing DNA supercoils. Finally, in the religation step, the DNA 3'-OH attacks the covalent intermediate to expel the active-site tyrosine and restore the DNA phosphodiester backbone (By similarity) (PubMed:25200077).</text>
</comment>
<comment type="catalytic activity">
    <reaction evidence="1 4">
        <text>ATP-independent breakage of single-stranded DNA, followed by passage and rejoining.</text>
        <dbReference type="EC" id="5.6.2.1"/>
    </reaction>
</comment>
<comment type="activity regulation">
    <text evidence="4">Relaxation of supercoiling is stimulated by MtHU (DNA-binding protein HU also called HupB); at more than 80uM HupB relaxation is inhibited (PubMed:25200077).</text>
</comment>
<comment type="subunit">
    <text evidence="1 4">Monomer (By similarity). Interacts with DNA-binding protein HU (hupB) (PubMed:25200077).</text>
</comment>
<comment type="domain">
    <text evidence="4">The C-terminal domain (resides 616-934) interact with DNA-binding protein HU (hupB).</text>
</comment>
<comment type="similarity">
    <text evidence="1">Belongs to the type IA topoisomerase family.</text>
</comment>